<organism evidence="10">
    <name type="scientific">Oryza sativa subsp. japonica</name>
    <name type="common">Rice</name>
    <dbReference type="NCBI Taxonomy" id="39947"/>
    <lineage>
        <taxon>Eukaryota</taxon>
        <taxon>Viridiplantae</taxon>
        <taxon>Streptophyta</taxon>
        <taxon>Embryophyta</taxon>
        <taxon>Tracheophyta</taxon>
        <taxon>Spermatophyta</taxon>
        <taxon>Magnoliopsida</taxon>
        <taxon>Liliopsida</taxon>
        <taxon>Poales</taxon>
        <taxon>Poaceae</taxon>
        <taxon>BOP clade</taxon>
        <taxon>Oryzoideae</taxon>
        <taxon>Oryzeae</taxon>
        <taxon>Oryzinae</taxon>
        <taxon>Oryza</taxon>
        <taxon>Oryza sativa</taxon>
    </lineage>
</organism>
<name>DSP1_ORYSJ</name>
<feature type="chain" id="PRO_0000460488" description="Inositol diphosphatase DSP1">
    <location>
        <begin position="1"/>
        <end position="222"/>
    </location>
</feature>
<feature type="domain" description="Tyrosine-protein phosphatase" evidence="3">
    <location>
        <begin position="68"/>
        <end position="222"/>
    </location>
</feature>
<feature type="region of interest" description="Disordered" evidence="4">
    <location>
        <begin position="1"/>
        <end position="41"/>
    </location>
</feature>
<feature type="region of interest" description="WPD loop important for active site topology" evidence="2">
    <location>
        <begin position="124"/>
        <end position="136"/>
    </location>
</feature>
<feature type="compositionally biased region" description="Polar residues" evidence="4">
    <location>
        <begin position="1"/>
        <end position="14"/>
    </location>
</feature>
<feature type="active site" description="Phosphocysteine intermediate" evidence="3">
    <location>
        <position position="160"/>
    </location>
</feature>
<feature type="binding site" evidence="2">
    <location>
        <position position="135"/>
    </location>
    <ligand>
        <name>1D-myo-inositol hexakisphosphate</name>
        <dbReference type="ChEBI" id="CHEBI:58130"/>
    </ligand>
</feature>
<feature type="binding site" evidence="2">
    <location>
        <position position="136"/>
    </location>
    <ligand>
        <name>1D-myo-inositol hexakisphosphate</name>
        <dbReference type="ChEBI" id="CHEBI:58130"/>
    </ligand>
</feature>
<feature type="binding site" evidence="2">
    <location>
        <position position="140"/>
    </location>
    <ligand>
        <name>1D-myo-inositol hexakisphosphate</name>
        <dbReference type="ChEBI" id="CHEBI:58130"/>
    </ligand>
</feature>
<feature type="site" description="Transition state stabilizer" evidence="1">
    <location>
        <position position="166"/>
    </location>
</feature>
<accession>Q6K461</accession>
<accession>Q0J3B1</accession>
<evidence type="ECO:0000250" key="1">
    <source>
        <dbReference type="UniProtKB" id="P53965"/>
    </source>
</evidence>
<evidence type="ECO:0000250" key="2">
    <source>
        <dbReference type="UniProtKB" id="Q9ZVN4"/>
    </source>
</evidence>
<evidence type="ECO:0000255" key="3">
    <source>
        <dbReference type="PROSITE-ProRule" id="PRU00160"/>
    </source>
</evidence>
<evidence type="ECO:0000256" key="4">
    <source>
        <dbReference type="SAM" id="MobiDB-lite"/>
    </source>
</evidence>
<evidence type="ECO:0000269" key="5">
    <source>
    </source>
</evidence>
<evidence type="ECO:0000303" key="6">
    <source>
    </source>
</evidence>
<evidence type="ECO:0000305" key="7"/>
<evidence type="ECO:0000312" key="8">
    <source>
        <dbReference type="EMBL" id="BAH00681.1"/>
    </source>
</evidence>
<evidence type="ECO:0000312" key="9">
    <source>
        <dbReference type="EMBL" id="BAT06973.1"/>
    </source>
</evidence>
<evidence type="ECO:0000312" key="10">
    <source>
        <dbReference type="Proteomes" id="UP000059680"/>
    </source>
</evidence>
<reference evidence="8" key="1">
    <citation type="journal article" date="2003" name="Science">
        <title>Collection, mapping, and annotation of over 28,000 cDNA clones from japonica rice.</title>
        <authorList>
            <consortium name="The rice full-length cDNA consortium"/>
        </authorList>
    </citation>
    <scope>NUCLEOTIDE SEQUENCE [LARGE SCALE MRNA]</scope>
    <source>
        <strain>cv. Nipponbare</strain>
    </source>
</reference>
<reference evidence="10" key="2">
    <citation type="journal article" date="2005" name="Nature">
        <title>The map-based sequence of the rice genome.</title>
        <authorList>
            <consortium name="International rice genome sequencing project (IRGSP)"/>
        </authorList>
    </citation>
    <scope>NUCLEOTIDE SEQUENCE [LARGE SCALE GENOMIC DNA]</scope>
    <source>
        <strain evidence="10">cv. Nipponbare</strain>
    </source>
</reference>
<reference key="3">
    <citation type="journal article" date="2013" name="Rice">
        <title>Improvement of the Oryza sativa Nipponbare reference genome using next generation sequence and optical map data.</title>
        <authorList>
            <person name="Kawahara Y."/>
            <person name="de la Bastide M."/>
            <person name="Hamilton J.P."/>
            <person name="Kanamori H."/>
            <person name="McCombie W.R."/>
            <person name="Ouyang S."/>
            <person name="Schwartz D.C."/>
            <person name="Tanaka T."/>
            <person name="Wu J."/>
            <person name="Zhou S."/>
            <person name="Childs K.L."/>
            <person name="Davidson R.M."/>
            <person name="Lin H."/>
            <person name="Quesada-Ocampo L."/>
            <person name="Vaillancourt B."/>
            <person name="Sakai H."/>
            <person name="Lee S.S."/>
            <person name="Kim J."/>
            <person name="Numa H."/>
            <person name="Itoh T."/>
            <person name="Buell C.R."/>
            <person name="Matsumoto T."/>
        </authorList>
    </citation>
    <scope>GENOME REANNOTATION</scope>
    <source>
        <strain>cv. Nipponbare</strain>
    </source>
</reference>
<reference evidence="7" key="4">
    <citation type="journal article" date="2012" name="Plant Cell Rep.">
        <title>OsPFA-DSP1, a rice protein tyrosine phosphatase, negatively regulates drought stress responses in transgenic tobacco and rice plants.</title>
        <authorList>
            <person name="Liu B."/>
            <person name="Fan J."/>
            <person name="Zhang Y."/>
            <person name="Mu P."/>
            <person name="Wang P."/>
            <person name="Su J."/>
            <person name="Lai H."/>
            <person name="Li S."/>
            <person name="Feng D."/>
            <person name="Wang J."/>
            <person name="Wang H."/>
        </authorList>
    </citation>
    <scope>FUNCTION</scope>
    <scope>SUBCELLULAR LOCATION</scope>
    <scope>INDUCTION</scope>
</reference>
<gene>
    <name evidence="6" type="primary">DSP1</name>
    <name evidence="9" type="ordered locus">Os09g0135700</name>
    <name evidence="9" type="ORF">OSNPB_090135700</name>
</gene>
<sequence length="222" mass="24983">MRQEATCSLVLTQDAQHRKNQPPLAEEDDDRDHTDDAMPPPCSILLRQEEGEATAAAAGEGLLVPPLNFAMVDHGVYRSGFPDISNLPFVESLRLRSVLCLCPEPYPEANQEFLRAHGIRLFQFGIDGSKEPFVNIPEDRIREALKVVLDVANHPVLIHCKRGKHRTGCVVGCLRKLQRWCLTSIFDEYQRFAAAKARVSDLRFMELFDISSLKHLPASFSC</sequence>
<proteinExistence type="evidence at transcript level"/>
<protein>
    <recommendedName>
        <fullName evidence="7">Inositol diphosphatase DSP1</fullName>
        <ecNumber evidence="2">3.6.1.52</ecNumber>
    </recommendedName>
    <alternativeName>
        <fullName evidence="7">Inositol pyrophosphate phosphatase DSP1</fullName>
    </alternativeName>
    <alternativeName>
        <fullName evidence="6">Protein PLANT AND FUNGI ATYPICAL DUAL-SPECIFICITY PHOSPHATASE 1</fullName>
        <shortName evidence="6">OsPFA-DSP1</shortName>
    </alternativeName>
</protein>
<keyword id="KW-0963">Cytoplasm</keyword>
<keyword id="KW-0378">Hydrolase</keyword>
<keyword id="KW-0539">Nucleus</keyword>
<keyword id="KW-1185">Reference proteome</keyword>
<comment type="function">
    <text evidence="2 5">Cleaves the beta-phosphate at the 5-position of soluble inositol pyrophosphates (By similarity). Has highest activity on 5-diphosphoinositol 1,2,3,4,6-pentakisphosphate (5-InsP(7)) (By similarity). Possesses phosphotyrosine phosphatase activity in vitro (PubMed:22218675). May contribute to regulation of drought stress responses (PubMed:22218675).</text>
</comment>
<comment type="catalytic activity">
    <reaction evidence="2">
        <text>5-diphospho-1D-myo-inositol 1,2,3,4,6-pentakisphosphate + H2O = 1D-myo-inositol hexakisphosphate + phosphate + H(+)</text>
        <dbReference type="Rhea" id="RHEA:22384"/>
        <dbReference type="ChEBI" id="CHEBI:15377"/>
        <dbReference type="ChEBI" id="CHEBI:15378"/>
        <dbReference type="ChEBI" id="CHEBI:43474"/>
        <dbReference type="ChEBI" id="CHEBI:58130"/>
        <dbReference type="ChEBI" id="CHEBI:58628"/>
        <dbReference type="EC" id="3.6.1.52"/>
    </reaction>
    <physiologicalReaction direction="left-to-right" evidence="2">
        <dbReference type="Rhea" id="RHEA:22385"/>
    </physiologicalReaction>
</comment>
<comment type="catalytic activity">
    <reaction evidence="2">
        <text>1,5-bis(diphospho)-1D-myo-inositol 2,3,4,6-tetrakisphosphate + H2O = 1-diphospho-1D-myo-inositol 2,3,4,5,6-pentakisphosphate + phosphate + 2 H(+)</text>
        <dbReference type="Rhea" id="RHEA:79699"/>
        <dbReference type="ChEBI" id="CHEBI:15377"/>
        <dbReference type="ChEBI" id="CHEBI:15378"/>
        <dbReference type="ChEBI" id="CHEBI:43474"/>
        <dbReference type="ChEBI" id="CHEBI:74946"/>
        <dbReference type="ChEBI" id="CHEBI:77983"/>
        <dbReference type="EC" id="3.6.1.52"/>
    </reaction>
    <physiologicalReaction direction="left-to-right" evidence="2">
        <dbReference type="Rhea" id="RHEA:79700"/>
    </physiologicalReaction>
</comment>
<comment type="catalytic activity">
    <reaction evidence="2">
        <text>3,5-bis(diphospho)-1D-myo-inositol 1,2,4,6-tetrakisphosphate + H2O = 3-diphospho-1D-myo-inositol 1,2,4,5,6-pentakisphosphate + phosphate + 2 H(+)</text>
        <dbReference type="Rhea" id="RHEA:56312"/>
        <dbReference type="ChEBI" id="CHEBI:15377"/>
        <dbReference type="ChEBI" id="CHEBI:15378"/>
        <dbReference type="ChEBI" id="CHEBI:43474"/>
        <dbReference type="ChEBI" id="CHEBI:140372"/>
        <dbReference type="ChEBI" id="CHEBI:140374"/>
        <dbReference type="EC" id="3.6.1.52"/>
    </reaction>
    <physiologicalReaction direction="left-to-right" evidence="2">
        <dbReference type="Rhea" id="RHEA:56313"/>
    </physiologicalReaction>
</comment>
<comment type="catalytic activity">
    <reaction evidence="2">
        <text>6-diphospho-1D-myo-inositol pentakisphosphate + H2O = 1D-myo-inositol hexakisphosphate + phosphate + H(+)</text>
        <dbReference type="Rhea" id="RHEA:79703"/>
        <dbReference type="ChEBI" id="CHEBI:15377"/>
        <dbReference type="ChEBI" id="CHEBI:15378"/>
        <dbReference type="ChEBI" id="CHEBI:43474"/>
        <dbReference type="ChEBI" id="CHEBI:58130"/>
        <dbReference type="ChEBI" id="CHEBI:230534"/>
        <dbReference type="EC" id="3.6.1.52"/>
    </reaction>
    <physiologicalReaction direction="left-to-right" evidence="2">
        <dbReference type="Rhea" id="RHEA:79704"/>
    </physiologicalReaction>
</comment>
<comment type="subcellular location">
    <subcellularLocation>
        <location evidence="5">Nucleus</location>
    </subcellularLocation>
    <subcellularLocation>
        <location evidence="5">Cytoplasm</location>
    </subcellularLocation>
</comment>
<comment type="induction">
    <text evidence="5">Induced by 20% PEG (polyethylene glycol) 6000 (to simulate drought), ABA (abscisic acid) and NaCl.</text>
</comment>
<comment type="similarity">
    <text evidence="7">Belongs to the protein-tyrosine phosphatase family. Atypical dual-specificity phosphatase Siw14-like subfamily.</text>
</comment>
<dbReference type="EC" id="3.6.1.52" evidence="2"/>
<dbReference type="EMBL" id="AK121831">
    <property type="protein sequence ID" value="BAH00681.1"/>
    <property type="molecule type" value="mRNA"/>
</dbReference>
<dbReference type="EMBL" id="AP014965">
    <property type="protein sequence ID" value="BAT06973.1"/>
    <property type="molecule type" value="Genomic_DNA"/>
</dbReference>
<dbReference type="SMR" id="Q6K461"/>
<dbReference type="FunCoup" id="Q6K461">
    <property type="interactions" value="6"/>
</dbReference>
<dbReference type="STRING" id="39947.Q6K461"/>
<dbReference type="PaxDb" id="39947-Q6K461"/>
<dbReference type="EnsemblPlants" id="Os09t0135700-01">
    <property type="protein sequence ID" value="Os09t0135700-01"/>
    <property type="gene ID" value="Os09g0135700"/>
</dbReference>
<dbReference type="Gramene" id="Os09t0135700-01">
    <property type="protein sequence ID" value="Os09t0135700-01"/>
    <property type="gene ID" value="Os09g0135700"/>
</dbReference>
<dbReference type="eggNOG" id="KOG1572">
    <property type="taxonomic scope" value="Eukaryota"/>
</dbReference>
<dbReference type="HOGENOM" id="CLU_047845_1_2_1"/>
<dbReference type="OMA" id="KIHRICT"/>
<dbReference type="OrthoDB" id="6375174at2759"/>
<dbReference type="Proteomes" id="UP000059680">
    <property type="component" value="Chromosome 9"/>
</dbReference>
<dbReference type="GO" id="GO:0005737">
    <property type="term" value="C:cytoplasm"/>
    <property type="evidence" value="ECO:0000314"/>
    <property type="project" value="UniProtKB"/>
</dbReference>
<dbReference type="GO" id="GO:0005634">
    <property type="term" value="C:nucleus"/>
    <property type="evidence" value="ECO:0000314"/>
    <property type="project" value="UniProtKB"/>
</dbReference>
<dbReference type="GO" id="GO:0052845">
    <property type="term" value="F:inositol-5-diphosphate-1,2,3,4,6-pentakisphosphate diphosphatase activity"/>
    <property type="evidence" value="ECO:0000250"/>
    <property type="project" value="UniProtKB"/>
</dbReference>
<dbReference type="GO" id="GO:0016791">
    <property type="term" value="F:phosphatase activity"/>
    <property type="evidence" value="ECO:0000314"/>
    <property type="project" value="UniProtKB"/>
</dbReference>
<dbReference type="CDD" id="cd14528">
    <property type="entry name" value="PFA-DSP_Siw14"/>
    <property type="match status" value="1"/>
</dbReference>
<dbReference type="FunFam" id="3.90.190.10:FF:000024">
    <property type="entry name" value="probable tyrosine-protein phosphatase At1g05000"/>
    <property type="match status" value="1"/>
</dbReference>
<dbReference type="Gene3D" id="3.90.190.10">
    <property type="entry name" value="Protein tyrosine phosphatase superfamily"/>
    <property type="match status" value="1"/>
</dbReference>
<dbReference type="InterPro" id="IPR020428">
    <property type="entry name" value="PFA-DSPs"/>
</dbReference>
<dbReference type="InterPro" id="IPR029021">
    <property type="entry name" value="Prot-tyrosine_phosphatase-like"/>
</dbReference>
<dbReference type="InterPro" id="IPR004861">
    <property type="entry name" value="Siw14-like"/>
</dbReference>
<dbReference type="InterPro" id="IPR016130">
    <property type="entry name" value="Tyr_Pase_AS"/>
</dbReference>
<dbReference type="InterPro" id="IPR020422">
    <property type="entry name" value="TYR_PHOSPHATASE_DUAL_dom"/>
</dbReference>
<dbReference type="PANTHER" id="PTHR31126:SF69">
    <property type="entry name" value="OS09G0135700 PROTEIN"/>
    <property type="match status" value="1"/>
</dbReference>
<dbReference type="PANTHER" id="PTHR31126">
    <property type="entry name" value="TYROSINE-PROTEIN PHOSPHATASE"/>
    <property type="match status" value="1"/>
</dbReference>
<dbReference type="Pfam" id="PF03162">
    <property type="entry name" value="Y_phosphatase2"/>
    <property type="match status" value="1"/>
</dbReference>
<dbReference type="PRINTS" id="PR01911">
    <property type="entry name" value="PFDSPHPHTASE"/>
</dbReference>
<dbReference type="SUPFAM" id="SSF52799">
    <property type="entry name" value="(Phosphotyrosine protein) phosphatases II"/>
    <property type="match status" value="1"/>
</dbReference>
<dbReference type="PROSITE" id="PS00383">
    <property type="entry name" value="TYR_PHOSPHATASE_1"/>
    <property type="match status" value="1"/>
</dbReference>
<dbReference type="PROSITE" id="PS50054">
    <property type="entry name" value="TYR_PHOSPHATASE_DUAL"/>
    <property type="match status" value="1"/>
</dbReference>